<keyword id="KW-0238">DNA-binding</keyword>
<keyword id="KW-0597">Phosphoprotein</keyword>
<keyword id="KW-0804">Transcription</keyword>
<keyword id="KW-0805">Transcription regulation</keyword>
<keyword id="KW-0902">Two-component regulatory system</keyword>
<evidence type="ECO:0000255" key="1">
    <source>
        <dbReference type="PROSITE-ProRule" id="PRU00169"/>
    </source>
</evidence>
<evidence type="ECO:0000255" key="2">
    <source>
        <dbReference type="PROSITE-ProRule" id="PRU01091"/>
    </source>
</evidence>
<evidence type="ECO:0000305" key="3"/>
<feature type="chain" id="PRO_0000081291" description="Response regulator GtcR">
    <location>
        <begin position="1"/>
        <end position="242"/>
    </location>
</feature>
<feature type="domain" description="Response regulatory" evidence="1">
    <location>
        <begin position="4"/>
        <end position="117"/>
    </location>
</feature>
<feature type="DNA-binding region" description="OmpR/PhoB-type" evidence="2">
    <location>
        <begin position="133"/>
        <end position="233"/>
    </location>
</feature>
<feature type="modified residue" description="4-aspartylphosphate" evidence="1">
    <location>
        <position position="53"/>
    </location>
</feature>
<organism>
    <name type="scientific">Aneurinibacillus migulanus</name>
    <name type="common">Bacillus migulanus</name>
    <dbReference type="NCBI Taxonomy" id="47500"/>
    <lineage>
        <taxon>Bacteria</taxon>
        <taxon>Bacillati</taxon>
        <taxon>Bacillota</taxon>
        <taxon>Bacilli</taxon>
        <taxon>Bacillales</taxon>
        <taxon>Paenibacillaceae</taxon>
        <taxon>Aneurinibacillus group</taxon>
        <taxon>Aneurinibacillus</taxon>
    </lineage>
</organism>
<comment type="function">
    <text>Member of the two-component regulatory system GtcS/GtcR which may act in the control of the transcription of the grs operon which encodes the multienzymes involved in the biosynthesis of the peptide antibiotic gramicidin S.</text>
</comment>
<comment type="PTM">
    <text evidence="3">Phosphorylated by GtcS.</text>
</comment>
<name>GTCR_ANEMI</name>
<protein>
    <recommendedName>
        <fullName>Response regulator GtcR</fullName>
    </recommendedName>
</protein>
<proteinExistence type="inferred from homology"/>
<gene>
    <name type="primary">gtcR</name>
</gene>
<reference key="1">
    <citation type="journal article" date="1995" name="DNA Seq.">
        <title>The gtcRS operon coding for two-component system regulatory proteins is located adjacent to the grs operon of Bacillus brevis.</title>
        <authorList>
            <person name="Turgay K."/>
            <person name="Marahiel M.A."/>
        </authorList>
    </citation>
    <scope>NUCLEOTIDE SEQUENCE [GENOMIC DNA]</scope>
    <source>
        <strain>ATCC 9999 / DSM 2895 / JCM 8504 / NBRC 15520 / NCIMB 7096 / NCTC 7096</strain>
    </source>
</reference>
<accession>Q44929</accession>
<dbReference type="EMBL" id="X78502">
    <property type="protein sequence ID" value="CAA55264.1"/>
    <property type="molecule type" value="Genomic_DNA"/>
</dbReference>
<dbReference type="PIR" id="I40084">
    <property type="entry name" value="I40084"/>
</dbReference>
<dbReference type="SMR" id="Q44929"/>
<dbReference type="STRING" id="47500.AF333_17635"/>
<dbReference type="GO" id="GO:0005829">
    <property type="term" value="C:cytosol"/>
    <property type="evidence" value="ECO:0007669"/>
    <property type="project" value="TreeGrafter"/>
</dbReference>
<dbReference type="GO" id="GO:0032993">
    <property type="term" value="C:protein-DNA complex"/>
    <property type="evidence" value="ECO:0007669"/>
    <property type="project" value="TreeGrafter"/>
</dbReference>
<dbReference type="GO" id="GO:0000156">
    <property type="term" value="F:phosphorelay response regulator activity"/>
    <property type="evidence" value="ECO:0007669"/>
    <property type="project" value="TreeGrafter"/>
</dbReference>
<dbReference type="GO" id="GO:0000976">
    <property type="term" value="F:transcription cis-regulatory region binding"/>
    <property type="evidence" value="ECO:0007669"/>
    <property type="project" value="TreeGrafter"/>
</dbReference>
<dbReference type="GO" id="GO:0006355">
    <property type="term" value="P:regulation of DNA-templated transcription"/>
    <property type="evidence" value="ECO:0007669"/>
    <property type="project" value="InterPro"/>
</dbReference>
<dbReference type="CDD" id="cd17574">
    <property type="entry name" value="REC_OmpR"/>
    <property type="match status" value="1"/>
</dbReference>
<dbReference type="CDD" id="cd00383">
    <property type="entry name" value="trans_reg_C"/>
    <property type="match status" value="1"/>
</dbReference>
<dbReference type="Gene3D" id="3.40.50.2300">
    <property type="match status" value="1"/>
</dbReference>
<dbReference type="Gene3D" id="6.10.250.690">
    <property type="match status" value="1"/>
</dbReference>
<dbReference type="Gene3D" id="1.10.10.10">
    <property type="entry name" value="Winged helix-like DNA-binding domain superfamily/Winged helix DNA-binding domain"/>
    <property type="match status" value="1"/>
</dbReference>
<dbReference type="InterPro" id="IPR011006">
    <property type="entry name" value="CheY-like_superfamily"/>
</dbReference>
<dbReference type="InterPro" id="IPR001867">
    <property type="entry name" value="OmpR/PhoB-type_DNA-bd"/>
</dbReference>
<dbReference type="InterPro" id="IPR016032">
    <property type="entry name" value="Sig_transdc_resp-reg_C-effctor"/>
</dbReference>
<dbReference type="InterPro" id="IPR001789">
    <property type="entry name" value="Sig_transdc_resp-reg_receiver"/>
</dbReference>
<dbReference type="InterPro" id="IPR039420">
    <property type="entry name" value="WalR-like"/>
</dbReference>
<dbReference type="InterPro" id="IPR036388">
    <property type="entry name" value="WH-like_DNA-bd_sf"/>
</dbReference>
<dbReference type="PANTHER" id="PTHR48111:SF40">
    <property type="entry name" value="PHOSPHATE REGULON TRANSCRIPTIONAL REGULATORY PROTEIN PHOB"/>
    <property type="match status" value="1"/>
</dbReference>
<dbReference type="PANTHER" id="PTHR48111">
    <property type="entry name" value="REGULATOR OF RPOS"/>
    <property type="match status" value="1"/>
</dbReference>
<dbReference type="Pfam" id="PF00072">
    <property type="entry name" value="Response_reg"/>
    <property type="match status" value="1"/>
</dbReference>
<dbReference type="Pfam" id="PF00486">
    <property type="entry name" value="Trans_reg_C"/>
    <property type="match status" value="1"/>
</dbReference>
<dbReference type="SMART" id="SM00448">
    <property type="entry name" value="REC"/>
    <property type="match status" value="1"/>
</dbReference>
<dbReference type="SMART" id="SM00862">
    <property type="entry name" value="Trans_reg_C"/>
    <property type="match status" value="1"/>
</dbReference>
<dbReference type="SUPFAM" id="SSF46894">
    <property type="entry name" value="C-terminal effector domain of the bipartite response regulators"/>
    <property type="match status" value="1"/>
</dbReference>
<dbReference type="SUPFAM" id="SSF52172">
    <property type="entry name" value="CheY-like"/>
    <property type="match status" value="1"/>
</dbReference>
<dbReference type="PROSITE" id="PS51755">
    <property type="entry name" value="OMPR_PHOB"/>
    <property type="match status" value="1"/>
</dbReference>
<dbReference type="PROSITE" id="PS50110">
    <property type="entry name" value="RESPONSE_REGULATORY"/>
    <property type="match status" value="1"/>
</dbReference>
<sequence length="242" mass="28115">MSKTILIADDEPEIIELLKLFLERESYRIIEAYDGEQAWNYIRQHPVDLAIIDIMMPALDGFQLIKRLTNEYKLPVIILSAKNRDSDKILGLGLGADDFISKPFNPLEAVARIQAQLRRAFEFNEPEEKAISTQSTTVGRLTLLHTACVVYRGDETYSVTPLEYRLLNTFMQCSRTSIFTKQQLFEQAWSETYWEDDNTIMVQISRLRDKIEDQPRQPVYIKTVRGLGYKFASKDDFDEEKT</sequence>